<organism>
    <name type="scientific">Xenopus tropicalis</name>
    <name type="common">Western clawed frog</name>
    <name type="synonym">Silurana tropicalis</name>
    <dbReference type="NCBI Taxonomy" id="8364"/>
    <lineage>
        <taxon>Eukaryota</taxon>
        <taxon>Metazoa</taxon>
        <taxon>Chordata</taxon>
        <taxon>Craniata</taxon>
        <taxon>Vertebrata</taxon>
        <taxon>Euteleostomi</taxon>
        <taxon>Amphibia</taxon>
        <taxon>Batrachia</taxon>
        <taxon>Anura</taxon>
        <taxon>Pipoidea</taxon>
        <taxon>Pipidae</taxon>
        <taxon>Xenopodinae</taxon>
        <taxon>Xenopus</taxon>
        <taxon>Silurana</taxon>
    </lineage>
</organism>
<protein>
    <recommendedName>
        <fullName>Inactive serine protease PAMR1</fullName>
    </recommendedName>
    <alternativeName>
        <fullName>Peptidase domain-containing protein associated with muscle regeneration 1</fullName>
    </alternativeName>
    <alternativeName>
        <fullName>Regeneration-associated muscle protease homolog</fullName>
    </alternativeName>
</protein>
<comment type="function">
    <text evidence="1">May play a role in regeneration of skeletal muscle.</text>
</comment>
<comment type="subcellular location">
    <subcellularLocation>
        <location evidence="7">Secreted</location>
    </subcellularLocation>
</comment>
<comment type="similarity">
    <text evidence="5">Belongs to the peptidase S1 family.</text>
</comment>
<comment type="caution">
    <text evidence="7">Although related to peptidase S1 family, lacks the conserved active Ser residue in position 667 which is replaced by a Thr, suggesting that it has no protease activity.</text>
</comment>
<dbReference type="EMBL" id="BC075430">
    <property type="protein sequence ID" value="AAH75430.1"/>
    <property type="molecule type" value="mRNA"/>
</dbReference>
<dbReference type="RefSeq" id="NP_001004944.1">
    <property type="nucleotide sequence ID" value="NM_001004944.1"/>
</dbReference>
<dbReference type="SMR" id="Q6DIV5"/>
<dbReference type="FunCoup" id="Q6DIV5">
    <property type="interactions" value="33"/>
</dbReference>
<dbReference type="MEROPS" id="S01.998"/>
<dbReference type="GlyCosmos" id="Q6DIV5">
    <property type="glycosylation" value="4 sites, No reported glycans"/>
</dbReference>
<dbReference type="PaxDb" id="8364-ENSXETP00000016453"/>
<dbReference type="DNASU" id="448349"/>
<dbReference type="GeneID" id="448349"/>
<dbReference type="KEGG" id="xtr:448349"/>
<dbReference type="AGR" id="Xenbase:XB-GENE-1012813"/>
<dbReference type="CTD" id="25891"/>
<dbReference type="Xenbase" id="XB-GENE-1012813">
    <property type="gene designation" value="pamr1"/>
</dbReference>
<dbReference type="eggNOG" id="KOG3627">
    <property type="taxonomic scope" value="Eukaryota"/>
</dbReference>
<dbReference type="InParanoid" id="Q6DIV5"/>
<dbReference type="OMA" id="YCAECRG"/>
<dbReference type="OrthoDB" id="6147874at2759"/>
<dbReference type="PhylomeDB" id="Q6DIV5"/>
<dbReference type="Proteomes" id="UP000008143">
    <property type="component" value="Chromosome 4"/>
</dbReference>
<dbReference type="GO" id="GO:0005576">
    <property type="term" value="C:extracellular region"/>
    <property type="evidence" value="ECO:0007669"/>
    <property type="project" value="UniProtKB-SubCell"/>
</dbReference>
<dbReference type="GO" id="GO:0005509">
    <property type="term" value="F:calcium ion binding"/>
    <property type="evidence" value="ECO:0007669"/>
    <property type="project" value="InterPro"/>
</dbReference>
<dbReference type="CDD" id="cd00033">
    <property type="entry name" value="CCP"/>
    <property type="match status" value="2"/>
</dbReference>
<dbReference type="CDD" id="cd00041">
    <property type="entry name" value="CUB"/>
    <property type="match status" value="1"/>
</dbReference>
<dbReference type="CDD" id="cd00054">
    <property type="entry name" value="EGF_CA"/>
    <property type="match status" value="1"/>
</dbReference>
<dbReference type="CDD" id="cd00190">
    <property type="entry name" value="Tryp_SPc"/>
    <property type="match status" value="1"/>
</dbReference>
<dbReference type="FunFam" id="2.10.25.10:FF:000066">
    <property type="entry name" value="FAT atypical cadherin 4"/>
    <property type="match status" value="1"/>
</dbReference>
<dbReference type="FunFam" id="2.60.120.290:FF:000005">
    <property type="entry name" value="Procollagen C-endopeptidase enhancer 1"/>
    <property type="match status" value="1"/>
</dbReference>
<dbReference type="FunFam" id="2.40.10.10:FF:000068">
    <property type="entry name" value="transmembrane protease serine 2"/>
    <property type="match status" value="1"/>
</dbReference>
<dbReference type="Gene3D" id="2.10.70.10">
    <property type="entry name" value="Complement Module, domain 1"/>
    <property type="match status" value="2"/>
</dbReference>
<dbReference type="Gene3D" id="2.10.25.10">
    <property type="entry name" value="Laminin"/>
    <property type="match status" value="1"/>
</dbReference>
<dbReference type="Gene3D" id="2.60.120.290">
    <property type="entry name" value="Spermadhesin, CUB domain"/>
    <property type="match status" value="1"/>
</dbReference>
<dbReference type="Gene3D" id="2.40.10.10">
    <property type="entry name" value="Trypsin-like serine proteases"/>
    <property type="match status" value="2"/>
</dbReference>
<dbReference type="InterPro" id="IPR000859">
    <property type="entry name" value="CUB_dom"/>
</dbReference>
<dbReference type="InterPro" id="IPR001881">
    <property type="entry name" value="EGF-like_Ca-bd_dom"/>
</dbReference>
<dbReference type="InterPro" id="IPR000742">
    <property type="entry name" value="EGF-like_dom"/>
</dbReference>
<dbReference type="InterPro" id="IPR009003">
    <property type="entry name" value="Peptidase_S1_PA"/>
</dbReference>
<dbReference type="InterPro" id="IPR043504">
    <property type="entry name" value="Peptidase_S1_PA_chymotrypsin"/>
</dbReference>
<dbReference type="InterPro" id="IPR051659">
    <property type="entry name" value="Serine_Protease_S1-Domain"/>
</dbReference>
<dbReference type="InterPro" id="IPR035914">
    <property type="entry name" value="Sperma_CUB_dom_sf"/>
</dbReference>
<dbReference type="InterPro" id="IPR035976">
    <property type="entry name" value="Sushi/SCR/CCP_sf"/>
</dbReference>
<dbReference type="InterPro" id="IPR000436">
    <property type="entry name" value="Sushi_SCR_CCP_dom"/>
</dbReference>
<dbReference type="InterPro" id="IPR001254">
    <property type="entry name" value="Trypsin_dom"/>
</dbReference>
<dbReference type="PANTHER" id="PTHR24254:SF9">
    <property type="entry name" value="INACTIVE SERINE PROTEASE PAMR1"/>
    <property type="match status" value="1"/>
</dbReference>
<dbReference type="PANTHER" id="PTHR24254">
    <property type="entry name" value="PROTHROMBIN"/>
    <property type="match status" value="1"/>
</dbReference>
<dbReference type="Pfam" id="PF00431">
    <property type="entry name" value="CUB"/>
    <property type="match status" value="1"/>
</dbReference>
<dbReference type="Pfam" id="PF00008">
    <property type="entry name" value="EGF"/>
    <property type="match status" value="1"/>
</dbReference>
<dbReference type="Pfam" id="PF00084">
    <property type="entry name" value="Sushi"/>
    <property type="match status" value="2"/>
</dbReference>
<dbReference type="Pfam" id="PF00089">
    <property type="entry name" value="Trypsin"/>
    <property type="match status" value="1"/>
</dbReference>
<dbReference type="SMART" id="SM00032">
    <property type="entry name" value="CCP"/>
    <property type="match status" value="2"/>
</dbReference>
<dbReference type="SMART" id="SM00042">
    <property type="entry name" value="CUB"/>
    <property type="match status" value="1"/>
</dbReference>
<dbReference type="SMART" id="SM00181">
    <property type="entry name" value="EGF"/>
    <property type="match status" value="2"/>
</dbReference>
<dbReference type="SMART" id="SM00179">
    <property type="entry name" value="EGF_CA"/>
    <property type="match status" value="1"/>
</dbReference>
<dbReference type="SMART" id="SM00020">
    <property type="entry name" value="Tryp_SPc"/>
    <property type="match status" value="1"/>
</dbReference>
<dbReference type="SUPFAM" id="SSF57535">
    <property type="entry name" value="Complement control module/SCR domain"/>
    <property type="match status" value="1"/>
</dbReference>
<dbReference type="SUPFAM" id="SSF57196">
    <property type="entry name" value="EGF/Laminin"/>
    <property type="match status" value="1"/>
</dbReference>
<dbReference type="SUPFAM" id="SSF49854">
    <property type="entry name" value="Spermadhesin, CUB domain"/>
    <property type="match status" value="1"/>
</dbReference>
<dbReference type="SUPFAM" id="SSF50494">
    <property type="entry name" value="Trypsin-like serine proteases"/>
    <property type="match status" value="1"/>
</dbReference>
<dbReference type="PROSITE" id="PS01180">
    <property type="entry name" value="CUB"/>
    <property type="match status" value="1"/>
</dbReference>
<dbReference type="PROSITE" id="PS00022">
    <property type="entry name" value="EGF_1"/>
    <property type="match status" value="1"/>
</dbReference>
<dbReference type="PROSITE" id="PS01186">
    <property type="entry name" value="EGF_2"/>
    <property type="match status" value="1"/>
</dbReference>
<dbReference type="PROSITE" id="PS50026">
    <property type="entry name" value="EGF_3"/>
    <property type="match status" value="1"/>
</dbReference>
<dbReference type="PROSITE" id="PS50923">
    <property type="entry name" value="SUSHI"/>
    <property type="match status" value="2"/>
</dbReference>
<dbReference type="PROSITE" id="PS50240">
    <property type="entry name" value="TRYPSIN_DOM"/>
    <property type="match status" value="1"/>
</dbReference>
<keyword id="KW-1015">Disulfide bond</keyword>
<keyword id="KW-0245">EGF-like domain</keyword>
<keyword id="KW-0325">Glycoprotein</keyword>
<keyword id="KW-1185">Reference proteome</keyword>
<keyword id="KW-0677">Repeat</keyword>
<keyword id="KW-0964">Secreted</keyword>
<keyword id="KW-0721">Serine protease homolog</keyword>
<keyword id="KW-0732">Signal</keyword>
<keyword id="KW-0768">Sushi</keyword>
<sequence length="722" mass="80367">MALLVWSSLVVASLHLLGTAAYPSRSKYTVINENCPGAEWNIMCRDCCEYDQVECACPDGNQKVGYTIPCCRNEENECDSCLIHPGCSIFENCKSCNNGSWGGTLDDFYIKGSYCSECRMGWYGGDCMRCGEVIQAARGEIMLESYPFNARCEWSIQVAPGYTVELRFGMLSLEFDYMCQYDYLEVRDGDNVDAKILKRFCGNQRPLSLRSTGNSLHLLFQSDGSKNFDGFYVTFEEVTGCSSTPCFHDGTCIADKTGSYRCACLAGYTGRHCENVIEEKSCKDPGAPMNGYRKLPDGAGLSLANHIKVGFKIHYFCNNSYVLSGNQERACLQGAQWSGKQPVCIKACKEPKVADLVRQKVLPSLVQSRETPLHQLYSASFTKEKTDILPTKKPALPPGELPPGYQHLHTQLQYDCVSPFYRRTGSSRRTCLKTGKWSGRAPSCIPICGKLENFNITQLGEQRWPWQAALYRRSNGVKDASLRKGSWVLVCSGALLNERTVVMAAHCVTDLGKSSIIKVSDMKVVLGKFYRDDDREEKSQQHLHISAVIVNPNYDPILLDSDIAVIKLLDKARVSDYVQPVCLTLATEMITSPQEYTIVISGWKILSDPRAPGSKNETIRAGAIEPVDSLQCEQQYEENGISVSVTESMFCAKQEPRPSPSICPSETGGITTVLLPSPTSPEGSWHLIGLVSWGYDKSCRKDLYTGYTKVVTFKEWLEKNMK</sequence>
<proteinExistence type="evidence at transcript level"/>
<reference key="1">
    <citation type="submission" date="2004-06" db="EMBL/GenBank/DDBJ databases">
        <authorList>
            <consortium name="NIH - Xenopus Gene Collection (XGC) project"/>
        </authorList>
    </citation>
    <scope>NUCLEOTIDE SEQUENCE [LARGE SCALE MRNA]</scope>
    <source>
        <strain>F6</strain>
    </source>
</reference>
<evidence type="ECO:0000250" key="1"/>
<evidence type="ECO:0000255" key="2"/>
<evidence type="ECO:0000255" key="3">
    <source>
        <dbReference type="PROSITE-ProRule" id="PRU00059"/>
    </source>
</evidence>
<evidence type="ECO:0000255" key="4">
    <source>
        <dbReference type="PROSITE-ProRule" id="PRU00076"/>
    </source>
</evidence>
<evidence type="ECO:0000255" key="5">
    <source>
        <dbReference type="PROSITE-ProRule" id="PRU00274"/>
    </source>
</evidence>
<evidence type="ECO:0000255" key="6">
    <source>
        <dbReference type="PROSITE-ProRule" id="PRU00302"/>
    </source>
</evidence>
<evidence type="ECO:0000305" key="7"/>
<feature type="signal peptide" evidence="2">
    <location>
        <begin position="1"/>
        <end position="21"/>
    </location>
</feature>
<feature type="chain" id="PRO_0000287605" description="Inactive serine protease PAMR1">
    <location>
        <begin position="22"/>
        <end position="722"/>
    </location>
</feature>
<feature type="domain" description="CUB" evidence="3">
    <location>
        <begin position="130"/>
        <end position="238"/>
    </location>
</feature>
<feature type="domain" description="EGF-like" evidence="4">
    <location>
        <begin position="237"/>
        <end position="274"/>
    </location>
</feature>
<feature type="domain" description="Sushi 1" evidence="6">
    <location>
        <begin position="280"/>
        <end position="346"/>
    </location>
</feature>
<feature type="domain" description="Sushi 2" evidence="6">
    <location>
        <begin position="393"/>
        <end position="446"/>
    </location>
</feature>
<feature type="domain" description="Peptidase S1" evidence="5">
    <location>
        <begin position="447"/>
        <end position="722"/>
    </location>
</feature>
<feature type="glycosylation site" description="N-linked (GlcNAc...) asparagine" evidence="2">
    <location>
        <position position="98"/>
    </location>
</feature>
<feature type="glycosylation site" description="N-linked (GlcNAc...) asparagine" evidence="2">
    <location>
        <position position="318"/>
    </location>
</feature>
<feature type="glycosylation site" description="N-linked (GlcNAc...) asparagine" evidence="2">
    <location>
        <position position="455"/>
    </location>
</feature>
<feature type="glycosylation site" description="N-linked (GlcNAc...) asparagine" evidence="2">
    <location>
        <position position="616"/>
    </location>
</feature>
<feature type="disulfide bond" evidence="1">
    <location>
        <begin position="130"/>
        <end position="152"/>
    </location>
</feature>
<feature type="disulfide bond" evidence="1">
    <location>
        <begin position="179"/>
        <end position="201"/>
    </location>
</feature>
<feature type="disulfide bond" evidence="1">
    <location>
        <begin position="241"/>
        <end position="252"/>
    </location>
</feature>
<feature type="disulfide bond" evidence="1">
    <location>
        <begin position="246"/>
        <end position="262"/>
    </location>
</feature>
<feature type="disulfide bond" evidence="1">
    <location>
        <begin position="264"/>
        <end position="273"/>
    </location>
</feature>
<feature type="disulfide bond" evidence="1">
    <location>
        <begin position="282"/>
        <end position="331"/>
    </location>
</feature>
<feature type="disulfide bond" evidence="1">
    <location>
        <begin position="317"/>
        <end position="344"/>
    </location>
</feature>
<feature type="disulfide bond" evidence="1">
    <location>
        <begin position="416"/>
        <end position="444"/>
    </location>
</feature>
<feature type="disulfide bond" evidence="1">
    <location>
        <begin position="491"/>
        <end position="507"/>
    </location>
</feature>
<feature type="disulfide bond" evidence="1">
    <location>
        <begin position="632"/>
        <end position="651"/>
    </location>
</feature>
<feature type="disulfide bond" evidence="1">
    <location>
        <begin position="663"/>
        <end position="699"/>
    </location>
</feature>
<name>PAMR1_XENTR</name>
<gene>
    <name type="primary">pamr1</name>
    <name type="synonym">ramp</name>
</gene>
<accession>Q6DIV5</accession>